<dbReference type="EMBL" id="AE005174">
    <property type="protein sequence ID" value="AAG58655.1"/>
    <property type="molecule type" value="Genomic_DNA"/>
</dbReference>
<dbReference type="EMBL" id="BA000007">
    <property type="protein sequence ID" value="BAB37817.1"/>
    <property type="molecule type" value="Genomic_DNA"/>
</dbReference>
<dbReference type="PIR" id="B91178">
    <property type="entry name" value="B91178"/>
</dbReference>
<dbReference type="PIR" id="C86024">
    <property type="entry name" value="C86024"/>
</dbReference>
<dbReference type="RefSeq" id="WP_000024883.1">
    <property type="nucleotide sequence ID" value="NZ_VOAI01000004.1"/>
</dbReference>
<dbReference type="SMR" id="Q8X3J5"/>
<dbReference type="STRING" id="155864.Z4927"/>
<dbReference type="KEGG" id="ece:Z4927"/>
<dbReference type="KEGG" id="ecs:ECs_4394"/>
<dbReference type="PATRIC" id="fig|386585.9.peg.4592"/>
<dbReference type="eggNOG" id="COG0841">
    <property type="taxonomic scope" value="Bacteria"/>
</dbReference>
<dbReference type="HOGENOM" id="CLU_002755_0_2_6"/>
<dbReference type="OMA" id="IITTMTV"/>
<dbReference type="Proteomes" id="UP000000558">
    <property type="component" value="Chromosome"/>
</dbReference>
<dbReference type="Proteomes" id="UP000002519">
    <property type="component" value="Chromosome"/>
</dbReference>
<dbReference type="GO" id="GO:0005886">
    <property type="term" value="C:plasma membrane"/>
    <property type="evidence" value="ECO:0007669"/>
    <property type="project" value="UniProtKB-SubCell"/>
</dbReference>
<dbReference type="GO" id="GO:0015562">
    <property type="term" value="F:efflux transmembrane transporter activity"/>
    <property type="evidence" value="ECO:0007669"/>
    <property type="project" value="InterPro"/>
</dbReference>
<dbReference type="GO" id="GO:0042910">
    <property type="term" value="F:xenobiotic transmembrane transporter activity"/>
    <property type="evidence" value="ECO:0007669"/>
    <property type="project" value="TreeGrafter"/>
</dbReference>
<dbReference type="GO" id="GO:0046677">
    <property type="term" value="P:response to antibiotic"/>
    <property type="evidence" value="ECO:0007669"/>
    <property type="project" value="UniProtKB-KW"/>
</dbReference>
<dbReference type="FunFam" id="1.20.1640.10:FF:000001">
    <property type="entry name" value="Efflux pump membrane transporter"/>
    <property type="match status" value="1"/>
</dbReference>
<dbReference type="FunFam" id="1.20.1640.10:FF:000002">
    <property type="entry name" value="Efflux pump membrane transporter"/>
    <property type="match status" value="1"/>
</dbReference>
<dbReference type="FunFam" id="3.30.2090.10:FF:000001">
    <property type="entry name" value="Efflux pump membrane transporter"/>
    <property type="match status" value="1"/>
</dbReference>
<dbReference type="FunFam" id="3.30.2090.10:FF:000002">
    <property type="entry name" value="Efflux pump membrane transporter"/>
    <property type="match status" value="1"/>
</dbReference>
<dbReference type="FunFam" id="3.30.70.1430:FF:000001">
    <property type="entry name" value="Efflux pump membrane transporter"/>
    <property type="match status" value="1"/>
</dbReference>
<dbReference type="FunFam" id="3.30.70.1430:FF:000002">
    <property type="entry name" value="Efflux pump membrane transporter"/>
    <property type="match status" value="1"/>
</dbReference>
<dbReference type="Gene3D" id="3.30.70.1430">
    <property type="entry name" value="Multidrug efflux transporter AcrB pore domain"/>
    <property type="match status" value="2"/>
</dbReference>
<dbReference type="Gene3D" id="3.30.70.1440">
    <property type="entry name" value="Multidrug efflux transporter AcrB pore domain"/>
    <property type="match status" value="1"/>
</dbReference>
<dbReference type="Gene3D" id="3.30.70.1320">
    <property type="entry name" value="Multidrug efflux transporter AcrB pore domain like"/>
    <property type="match status" value="1"/>
</dbReference>
<dbReference type="Gene3D" id="3.30.2090.10">
    <property type="entry name" value="Multidrug efflux transporter AcrB TolC docking domain, DN and DC subdomains"/>
    <property type="match status" value="2"/>
</dbReference>
<dbReference type="Gene3D" id="1.20.1640.10">
    <property type="entry name" value="Multidrug efflux transporter AcrB transmembrane domain"/>
    <property type="match status" value="2"/>
</dbReference>
<dbReference type="InterPro" id="IPR027463">
    <property type="entry name" value="AcrB_DN_DC_subdom"/>
</dbReference>
<dbReference type="InterPro" id="IPR001036">
    <property type="entry name" value="Acrflvin-R"/>
</dbReference>
<dbReference type="InterPro" id="IPR004764">
    <property type="entry name" value="MdtF-like"/>
</dbReference>
<dbReference type="NCBIfam" id="TIGR00915">
    <property type="entry name" value="2A0602"/>
    <property type="match status" value="1"/>
</dbReference>
<dbReference type="NCBIfam" id="NF000282">
    <property type="entry name" value="RND_permease_1"/>
    <property type="match status" value="1"/>
</dbReference>
<dbReference type="PANTHER" id="PTHR32063">
    <property type="match status" value="1"/>
</dbReference>
<dbReference type="PANTHER" id="PTHR32063:SF13">
    <property type="entry name" value="MULTIDRUG EFFLUX PUMP SUBUNIT ACRB-RELATED"/>
    <property type="match status" value="1"/>
</dbReference>
<dbReference type="Pfam" id="PF00873">
    <property type="entry name" value="ACR_tran"/>
    <property type="match status" value="1"/>
</dbReference>
<dbReference type="PRINTS" id="PR00702">
    <property type="entry name" value="ACRIFLAVINRP"/>
</dbReference>
<dbReference type="SUPFAM" id="SSF82693">
    <property type="entry name" value="Multidrug efflux transporter AcrB pore domain, PN1, PN2, PC1 and PC2 subdomains"/>
    <property type="match status" value="4"/>
</dbReference>
<dbReference type="SUPFAM" id="SSF82714">
    <property type="entry name" value="Multidrug efflux transporter AcrB TolC docking domain, DN and DC subdomains"/>
    <property type="match status" value="2"/>
</dbReference>
<dbReference type="SUPFAM" id="SSF82866">
    <property type="entry name" value="Multidrug efflux transporter AcrB transmembrane domain"/>
    <property type="match status" value="2"/>
</dbReference>
<comment type="function">
    <text evidence="1">Part of the tripartite efflux system MdtEF-TolC, which confers resistance to various compounds.</text>
</comment>
<comment type="subunit">
    <text evidence="1">Homotrimer. Part of the tripartite efflux system MdtEF-TolC, which is composed of an inner membrane transporter, MdtF, a membrane fusion protein, MdtE, and an outer membrane component, TolC. The complex forms a large protein conduit and can translocate molecules across both the inner and outer membranes (By similarity).</text>
</comment>
<comment type="subcellular location">
    <subcellularLocation>
        <location evidence="1">Cell inner membrane</location>
        <topology evidence="1">Multi-pass membrane protein</topology>
    </subcellularLocation>
</comment>
<comment type="similarity">
    <text evidence="3">Belongs to the resistance-nodulation-cell division (RND) (TC 2.A.6) family.</text>
</comment>
<keyword id="KW-0046">Antibiotic resistance</keyword>
<keyword id="KW-0997">Cell inner membrane</keyword>
<keyword id="KW-1003">Cell membrane</keyword>
<keyword id="KW-0472">Membrane</keyword>
<keyword id="KW-1185">Reference proteome</keyword>
<keyword id="KW-0812">Transmembrane</keyword>
<keyword id="KW-1133">Transmembrane helix</keyword>
<keyword id="KW-0813">Transport</keyword>
<feature type="chain" id="PRO_0000161843" description="Multidrug resistance protein MdtF">
    <location>
        <begin position="1"/>
        <end position="1037"/>
    </location>
</feature>
<feature type="topological domain" description="Cytoplasmic" evidence="2">
    <location>
        <begin position="1"/>
        <end position="9"/>
    </location>
</feature>
<feature type="transmembrane region" description="Helical" evidence="2">
    <location>
        <begin position="10"/>
        <end position="30"/>
    </location>
</feature>
<feature type="topological domain" description="Periplasmic" evidence="2">
    <location>
        <begin position="31"/>
        <end position="338"/>
    </location>
</feature>
<feature type="transmembrane region" description="Helical" evidence="2">
    <location>
        <begin position="339"/>
        <end position="359"/>
    </location>
</feature>
<feature type="topological domain" description="Cytoplasmic" evidence="2">
    <location>
        <begin position="360"/>
        <end position="369"/>
    </location>
</feature>
<feature type="transmembrane region" description="Helical" evidence="2">
    <location>
        <begin position="370"/>
        <end position="390"/>
    </location>
</feature>
<feature type="topological domain" description="Periplasmic" evidence="2">
    <location>
        <begin position="391"/>
        <end position="392"/>
    </location>
</feature>
<feature type="transmembrane region" description="Helical" evidence="2">
    <location>
        <begin position="393"/>
        <end position="413"/>
    </location>
</feature>
<feature type="topological domain" description="Cytoplasmic" evidence="2">
    <location>
        <begin position="414"/>
        <end position="441"/>
    </location>
</feature>
<feature type="transmembrane region" description="Helical" evidence="2">
    <location>
        <begin position="442"/>
        <end position="462"/>
    </location>
</feature>
<feature type="topological domain" description="Periplasmic" evidence="2">
    <location>
        <begin position="463"/>
        <end position="471"/>
    </location>
</feature>
<feature type="transmembrane region" description="Helical" evidence="2">
    <location>
        <begin position="472"/>
        <end position="492"/>
    </location>
</feature>
<feature type="topological domain" description="Cytoplasmic" evidence="2">
    <location>
        <begin position="493"/>
        <end position="534"/>
    </location>
</feature>
<feature type="transmembrane region" description="Helical" evidence="2">
    <location>
        <begin position="535"/>
        <end position="555"/>
    </location>
</feature>
<feature type="topological domain" description="Periplasmic" evidence="2">
    <location>
        <begin position="556"/>
        <end position="870"/>
    </location>
</feature>
<feature type="transmembrane region" description="Helical" evidence="2">
    <location>
        <begin position="871"/>
        <end position="891"/>
    </location>
</feature>
<feature type="topological domain" description="Cytoplasmic" evidence="2">
    <location>
        <position position="892"/>
    </location>
</feature>
<feature type="transmembrane region" description="Helical" evidence="2">
    <location>
        <begin position="893"/>
        <end position="913"/>
    </location>
</feature>
<feature type="topological domain" description="Periplasmic" evidence="2">
    <location>
        <begin position="914"/>
        <end position="927"/>
    </location>
</feature>
<feature type="transmembrane region" description="Helical" evidence="2">
    <location>
        <begin position="928"/>
        <end position="948"/>
    </location>
</feature>
<feature type="topological domain" description="Cytoplasmic" evidence="2">
    <location>
        <begin position="949"/>
        <end position="972"/>
    </location>
</feature>
<feature type="transmembrane region" description="Helical" evidence="2">
    <location>
        <begin position="973"/>
        <end position="993"/>
    </location>
</feature>
<feature type="topological domain" description="Periplasmic" evidence="2">
    <location>
        <begin position="994"/>
        <end position="1006"/>
    </location>
</feature>
<feature type="transmembrane region" description="Helical" evidence="2">
    <location>
        <begin position="1007"/>
        <end position="1027"/>
    </location>
</feature>
<feature type="topological domain" description="Cytoplasmic" evidence="2">
    <location>
        <begin position="1028"/>
        <end position="1037"/>
    </location>
</feature>
<evidence type="ECO:0000250" key="1"/>
<evidence type="ECO:0000255" key="2"/>
<evidence type="ECO:0000305" key="3"/>
<accession>Q8X3J5</accession>
<accession>Q8X291</accession>
<organism>
    <name type="scientific">Escherichia coli O157:H7</name>
    <dbReference type="NCBI Taxonomy" id="83334"/>
    <lineage>
        <taxon>Bacteria</taxon>
        <taxon>Pseudomonadati</taxon>
        <taxon>Pseudomonadota</taxon>
        <taxon>Gammaproteobacteria</taxon>
        <taxon>Enterobacterales</taxon>
        <taxon>Enterobacteriaceae</taxon>
        <taxon>Escherichia</taxon>
    </lineage>
</organism>
<name>MDTF_ECO57</name>
<gene>
    <name type="primary">mdtF</name>
    <name type="ordered locus">Z4927</name>
    <name type="ordered locus">ECs4394</name>
</gene>
<proteinExistence type="inferred from homology"/>
<reference key="1">
    <citation type="journal article" date="2001" name="Nature">
        <title>Genome sequence of enterohaemorrhagic Escherichia coli O157:H7.</title>
        <authorList>
            <person name="Perna N.T."/>
            <person name="Plunkett G. III"/>
            <person name="Burland V."/>
            <person name="Mau B."/>
            <person name="Glasner J.D."/>
            <person name="Rose D.J."/>
            <person name="Mayhew G.F."/>
            <person name="Evans P.S."/>
            <person name="Gregor J."/>
            <person name="Kirkpatrick H.A."/>
            <person name="Posfai G."/>
            <person name="Hackett J."/>
            <person name="Klink S."/>
            <person name="Boutin A."/>
            <person name="Shao Y."/>
            <person name="Miller L."/>
            <person name="Grotbeck E.J."/>
            <person name="Davis N.W."/>
            <person name="Lim A."/>
            <person name="Dimalanta E.T."/>
            <person name="Potamousis K."/>
            <person name="Apodaca J."/>
            <person name="Anantharaman T.S."/>
            <person name="Lin J."/>
            <person name="Yen G."/>
            <person name="Schwartz D.C."/>
            <person name="Welch R.A."/>
            <person name="Blattner F.R."/>
        </authorList>
    </citation>
    <scope>NUCLEOTIDE SEQUENCE [LARGE SCALE GENOMIC DNA]</scope>
    <source>
        <strain>O157:H7 / EDL933 / ATCC 700927 / EHEC</strain>
    </source>
</reference>
<reference key="2">
    <citation type="journal article" date="2001" name="DNA Res.">
        <title>Complete genome sequence of enterohemorrhagic Escherichia coli O157:H7 and genomic comparison with a laboratory strain K-12.</title>
        <authorList>
            <person name="Hayashi T."/>
            <person name="Makino K."/>
            <person name="Ohnishi M."/>
            <person name="Kurokawa K."/>
            <person name="Ishii K."/>
            <person name="Yokoyama K."/>
            <person name="Han C.-G."/>
            <person name="Ohtsubo E."/>
            <person name="Nakayama K."/>
            <person name="Murata T."/>
            <person name="Tanaka M."/>
            <person name="Tobe T."/>
            <person name="Iida T."/>
            <person name="Takami H."/>
            <person name="Honda T."/>
            <person name="Sasakawa C."/>
            <person name="Ogasawara N."/>
            <person name="Yasunaga T."/>
            <person name="Kuhara S."/>
            <person name="Shiba T."/>
            <person name="Hattori M."/>
            <person name="Shinagawa H."/>
        </authorList>
    </citation>
    <scope>NUCLEOTIDE SEQUENCE [LARGE SCALE GENOMIC DNA]</scope>
    <source>
        <strain>O157:H7 / Sakai / RIMD 0509952 / EHEC</strain>
    </source>
</reference>
<protein>
    <recommendedName>
        <fullName>Multidrug resistance protein MdtF</fullName>
    </recommendedName>
</protein>
<sequence>MANYFIDRPVFAWVLAIIMMLAGGLAIMNLPVAQYPQIAPPTITVSATYPGADAQTVEDSVTQVIEQNMNGLDGLMYMSSTSDAAGNASITLTFETGTSPDIAQVQVQNKLQLAMPSLPEAVQQQGISVDKSSSNILMVAAFISDNGSLNQYDIADYVASNIKDPLSRTAGVGSVQLFGSEYAMRIWLDPQKLNKYNLVPSDVISQIKVQNNQISGGQLGGMPQAADQQLNASIIVQTRLQTPEEFGKILLKVQQDGSQVLLRDVARVELGAEDYSTVARYNGKPAAGIAIKLATGANALDTSRAVKEELNRLSAYFPASLKTVYPYDTTPFIEISIQEVFKTLVEAIILVFLVMYLFLQNFRATIIPTIAVPVVILGTFAILSAVGFTINTLTMFGMVLAIGLLVDDAIVVVENVERVIAEDKLPPKEATHKSMGQIQRALVGIAVVLSAVFMPMAFMSGATGEIYRQFSITLISSMLLSVFVAMSLTPALCATILKAAPEGGHKPNALFARFNTLFEKSTQHYTDSTRSLLRCTGRYMVIYLLICAGMAVLFLRTPTSFLPEEDQGVFMTTAQLPSGATMVNTTKVLQQVTDYYLTKEKDNVQSVFTVGGFGFSGQGQNNGLAFISLKPWSERVGEENSVTAIIQRAMIALSSINKAVVFPFNLPAVAELGTASGFDMELLDNGNLGHEKLTQARNELLSLAAQSPNQVTGVRPNGLEDTPMFKVNVNAAKAEAMGVALSDINQTISTAFGSSYVNDFLNQGRVKKVYVQAGTPFRMLPDNINQWYVRNASGTMAPLSAYSSTEWTYGSPRLERYNGIPSMEILGEAAAGKSTGDAMKFMADLVAKLPAGVGYSWTGLSYQEALSSNQAPALYAISLVVVFLALAALYESWSIPFSVMLVVPLGVVGALLATDLRGLSNDVYFQVGLLTTIGLSAKNAILIVEFAVEMMQKEGKTPIEAIIEAARMRLRPILMTSLAFILGVLPLVISHGAGSGAQNAVGTGVMGGMFAATVLAIYFVPVFFVVVEHLFARFKKA</sequence>